<sequence length="345" mass="38603">MKVAIIGATGYGGIELIRLLEQHPYFSIASLHSFSQVGECITNVYPHFQNVLVHTLQEIDVEEIEKEAEIVFLATPAGVSAELTPKLLAVGLKVIDLSGDFRMKDPFIYEQWYKRAAAKEGVLREAVYGLSEWKRSEIQKANLIANPGCFATAALLAILPLVRSGIIEEDSIIIDAKSGVSGAGKTPTTMTHFPELYDNLRIYKVNEHQHIPEIEQMLAEWNRETKPITFSTHLIPISRGIMVTLYAKVKREMEIEQLQQLYEEAYEQSAFIRIRMQGEFPSPKEVRGSNYCDMGIAYDERTGRVTIVSVIDNMMKGAAGQAIQNANIVAGLEETTGLQHMPLYL</sequence>
<dbReference type="EC" id="1.2.1.38" evidence="1"/>
<dbReference type="EMBL" id="AE016879">
    <property type="protein sequence ID" value="AAP28073.1"/>
    <property type="molecule type" value="Genomic_DNA"/>
</dbReference>
<dbReference type="EMBL" id="AE017334">
    <property type="protein sequence ID" value="AAT33475.1"/>
    <property type="molecule type" value="Genomic_DNA"/>
</dbReference>
<dbReference type="EMBL" id="AE017225">
    <property type="protein sequence ID" value="AAT56341.1"/>
    <property type="molecule type" value="Genomic_DNA"/>
</dbReference>
<dbReference type="RefSeq" id="NP_846587.1">
    <property type="nucleotide sequence ID" value="NC_003997.3"/>
</dbReference>
<dbReference type="RefSeq" id="WP_000861221.1">
    <property type="nucleotide sequence ID" value="NZ_WXXJ01000027.1"/>
</dbReference>
<dbReference type="RefSeq" id="YP_030290.1">
    <property type="nucleotide sequence ID" value="NC_005945.1"/>
</dbReference>
<dbReference type="SMR" id="Q81M95"/>
<dbReference type="STRING" id="261594.GBAA_4355"/>
<dbReference type="DNASU" id="1087584"/>
<dbReference type="GeneID" id="45024020"/>
<dbReference type="KEGG" id="ban:BA_4355"/>
<dbReference type="KEGG" id="banh:HYU01_21265"/>
<dbReference type="KEGG" id="bar:GBAA_4355"/>
<dbReference type="KEGG" id="bat:BAS4040"/>
<dbReference type="PATRIC" id="fig|198094.11.peg.4323"/>
<dbReference type="eggNOG" id="COG0002">
    <property type="taxonomic scope" value="Bacteria"/>
</dbReference>
<dbReference type="HOGENOM" id="CLU_006384_0_1_9"/>
<dbReference type="OMA" id="PHLTPMI"/>
<dbReference type="OrthoDB" id="9801289at2"/>
<dbReference type="UniPathway" id="UPA00068">
    <property type="reaction ID" value="UER00108"/>
</dbReference>
<dbReference type="Proteomes" id="UP000000427">
    <property type="component" value="Chromosome"/>
</dbReference>
<dbReference type="Proteomes" id="UP000000594">
    <property type="component" value="Chromosome"/>
</dbReference>
<dbReference type="GO" id="GO:0005737">
    <property type="term" value="C:cytoplasm"/>
    <property type="evidence" value="ECO:0007669"/>
    <property type="project" value="UniProtKB-SubCell"/>
</dbReference>
<dbReference type="GO" id="GO:0003942">
    <property type="term" value="F:N-acetyl-gamma-glutamyl-phosphate reductase activity"/>
    <property type="evidence" value="ECO:0007669"/>
    <property type="project" value="UniProtKB-UniRule"/>
</dbReference>
<dbReference type="GO" id="GO:0051287">
    <property type="term" value="F:NAD binding"/>
    <property type="evidence" value="ECO:0007669"/>
    <property type="project" value="InterPro"/>
</dbReference>
<dbReference type="GO" id="GO:0070401">
    <property type="term" value="F:NADP+ binding"/>
    <property type="evidence" value="ECO:0007669"/>
    <property type="project" value="InterPro"/>
</dbReference>
<dbReference type="GO" id="GO:0006526">
    <property type="term" value="P:L-arginine biosynthetic process"/>
    <property type="evidence" value="ECO:0007669"/>
    <property type="project" value="UniProtKB-UniRule"/>
</dbReference>
<dbReference type="CDD" id="cd23934">
    <property type="entry name" value="AGPR_1_C"/>
    <property type="match status" value="1"/>
</dbReference>
<dbReference type="CDD" id="cd17895">
    <property type="entry name" value="AGPR_1_N"/>
    <property type="match status" value="1"/>
</dbReference>
<dbReference type="FunFam" id="3.30.360.10:FF:000014">
    <property type="entry name" value="N-acetyl-gamma-glutamyl-phosphate reductase"/>
    <property type="match status" value="1"/>
</dbReference>
<dbReference type="FunFam" id="3.40.50.720:FF:000117">
    <property type="entry name" value="N-acetyl-gamma-glutamyl-phosphate reductase"/>
    <property type="match status" value="1"/>
</dbReference>
<dbReference type="Gene3D" id="3.30.360.10">
    <property type="entry name" value="Dihydrodipicolinate Reductase, domain 2"/>
    <property type="match status" value="1"/>
</dbReference>
<dbReference type="Gene3D" id="3.40.50.720">
    <property type="entry name" value="NAD(P)-binding Rossmann-like Domain"/>
    <property type="match status" value="1"/>
</dbReference>
<dbReference type="HAMAP" id="MF_00150">
    <property type="entry name" value="ArgC_type1"/>
    <property type="match status" value="1"/>
</dbReference>
<dbReference type="InterPro" id="IPR023013">
    <property type="entry name" value="AGPR_AS"/>
</dbReference>
<dbReference type="InterPro" id="IPR000706">
    <property type="entry name" value="AGPR_type-1"/>
</dbReference>
<dbReference type="InterPro" id="IPR036291">
    <property type="entry name" value="NAD(P)-bd_dom_sf"/>
</dbReference>
<dbReference type="InterPro" id="IPR050085">
    <property type="entry name" value="NAGSA_dehydrogenase"/>
</dbReference>
<dbReference type="InterPro" id="IPR000534">
    <property type="entry name" value="Semialdehyde_DH_NAD-bd"/>
</dbReference>
<dbReference type="NCBIfam" id="TIGR01850">
    <property type="entry name" value="argC"/>
    <property type="match status" value="1"/>
</dbReference>
<dbReference type="PANTHER" id="PTHR32338:SF10">
    <property type="entry name" value="N-ACETYL-GAMMA-GLUTAMYL-PHOSPHATE REDUCTASE, CHLOROPLASTIC-RELATED"/>
    <property type="match status" value="1"/>
</dbReference>
<dbReference type="PANTHER" id="PTHR32338">
    <property type="entry name" value="N-ACETYL-GAMMA-GLUTAMYL-PHOSPHATE REDUCTASE, CHLOROPLASTIC-RELATED-RELATED"/>
    <property type="match status" value="1"/>
</dbReference>
<dbReference type="Pfam" id="PF01118">
    <property type="entry name" value="Semialdhyde_dh"/>
    <property type="match status" value="1"/>
</dbReference>
<dbReference type="Pfam" id="PF22698">
    <property type="entry name" value="Semialdhyde_dhC_1"/>
    <property type="match status" value="1"/>
</dbReference>
<dbReference type="SMART" id="SM00859">
    <property type="entry name" value="Semialdhyde_dh"/>
    <property type="match status" value="1"/>
</dbReference>
<dbReference type="SUPFAM" id="SSF55347">
    <property type="entry name" value="Glyceraldehyde-3-phosphate dehydrogenase-like, C-terminal domain"/>
    <property type="match status" value="1"/>
</dbReference>
<dbReference type="SUPFAM" id="SSF51735">
    <property type="entry name" value="NAD(P)-binding Rossmann-fold domains"/>
    <property type="match status" value="1"/>
</dbReference>
<dbReference type="PROSITE" id="PS01224">
    <property type="entry name" value="ARGC"/>
    <property type="match status" value="1"/>
</dbReference>
<protein>
    <recommendedName>
        <fullName evidence="1">N-acetyl-gamma-glutamyl-phosphate reductase</fullName>
        <shortName evidence="1">AGPR</shortName>
        <ecNumber evidence="1">1.2.1.38</ecNumber>
    </recommendedName>
    <alternativeName>
        <fullName evidence="1">N-acetyl-glutamate semialdehyde dehydrogenase</fullName>
        <shortName evidence="1">NAGSA dehydrogenase</shortName>
    </alternativeName>
</protein>
<gene>
    <name evidence="1" type="primary">argC</name>
    <name type="ordered locus">BA_4355</name>
    <name type="ordered locus">GBAA_4355</name>
    <name type="ordered locus">BAS4040</name>
</gene>
<proteinExistence type="inferred from homology"/>
<comment type="function">
    <text evidence="1">Catalyzes the NADPH-dependent reduction of N-acetyl-5-glutamyl phosphate to yield N-acetyl-L-glutamate 5-semialdehyde.</text>
</comment>
<comment type="catalytic activity">
    <reaction evidence="1">
        <text>N-acetyl-L-glutamate 5-semialdehyde + phosphate + NADP(+) = N-acetyl-L-glutamyl 5-phosphate + NADPH + H(+)</text>
        <dbReference type="Rhea" id="RHEA:21588"/>
        <dbReference type="ChEBI" id="CHEBI:15378"/>
        <dbReference type="ChEBI" id="CHEBI:29123"/>
        <dbReference type="ChEBI" id="CHEBI:43474"/>
        <dbReference type="ChEBI" id="CHEBI:57783"/>
        <dbReference type="ChEBI" id="CHEBI:57936"/>
        <dbReference type="ChEBI" id="CHEBI:58349"/>
        <dbReference type="EC" id="1.2.1.38"/>
    </reaction>
</comment>
<comment type="pathway">
    <text evidence="1">Amino-acid biosynthesis; L-arginine biosynthesis; N(2)-acetyl-L-ornithine from L-glutamate: step 3/4.</text>
</comment>
<comment type="subcellular location">
    <subcellularLocation>
        <location evidence="1">Cytoplasm</location>
    </subcellularLocation>
</comment>
<comment type="similarity">
    <text evidence="1">Belongs to the NAGSA dehydrogenase family. Type 1 subfamily.</text>
</comment>
<name>ARGC_BACAN</name>
<accession>Q81M95</accession>
<accession>Q6HTP8</accession>
<accession>Q6KMY7</accession>
<keyword id="KW-0028">Amino-acid biosynthesis</keyword>
<keyword id="KW-0055">Arginine biosynthesis</keyword>
<keyword id="KW-0963">Cytoplasm</keyword>
<keyword id="KW-0521">NADP</keyword>
<keyword id="KW-0560">Oxidoreductase</keyword>
<keyword id="KW-1185">Reference proteome</keyword>
<feature type="chain" id="PRO_0000112377" description="N-acetyl-gamma-glutamyl-phosphate reductase">
    <location>
        <begin position="1"/>
        <end position="345"/>
    </location>
</feature>
<feature type="active site" evidence="1">
    <location>
        <position position="149"/>
    </location>
</feature>
<reference key="1">
    <citation type="journal article" date="2003" name="Nature">
        <title>The genome sequence of Bacillus anthracis Ames and comparison to closely related bacteria.</title>
        <authorList>
            <person name="Read T.D."/>
            <person name="Peterson S.N."/>
            <person name="Tourasse N.J."/>
            <person name="Baillie L.W."/>
            <person name="Paulsen I.T."/>
            <person name="Nelson K.E."/>
            <person name="Tettelin H."/>
            <person name="Fouts D.E."/>
            <person name="Eisen J.A."/>
            <person name="Gill S.R."/>
            <person name="Holtzapple E.K."/>
            <person name="Okstad O.A."/>
            <person name="Helgason E."/>
            <person name="Rilstone J."/>
            <person name="Wu M."/>
            <person name="Kolonay J.F."/>
            <person name="Beanan M.J."/>
            <person name="Dodson R.J."/>
            <person name="Brinkac L.M."/>
            <person name="Gwinn M.L."/>
            <person name="DeBoy R.T."/>
            <person name="Madpu R."/>
            <person name="Daugherty S.C."/>
            <person name="Durkin A.S."/>
            <person name="Haft D.H."/>
            <person name="Nelson W.C."/>
            <person name="Peterson J.D."/>
            <person name="Pop M."/>
            <person name="Khouri H.M."/>
            <person name="Radune D."/>
            <person name="Benton J.L."/>
            <person name="Mahamoud Y."/>
            <person name="Jiang L."/>
            <person name="Hance I.R."/>
            <person name="Weidman J.F."/>
            <person name="Berry K.J."/>
            <person name="Plaut R.D."/>
            <person name="Wolf A.M."/>
            <person name="Watkins K.L."/>
            <person name="Nierman W.C."/>
            <person name="Hazen A."/>
            <person name="Cline R.T."/>
            <person name="Redmond C."/>
            <person name="Thwaite J.E."/>
            <person name="White O."/>
            <person name="Salzberg S.L."/>
            <person name="Thomason B."/>
            <person name="Friedlander A.M."/>
            <person name="Koehler T.M."/>
            <person name="Hanna P.C."/>
            <person name="Kolstoe A.-B."/>
            <person name="Fraser C.M."/>
        </authorList>
    </citation>
    <scope>NUCLEOTIDE SEQUENCE [LARGE SCALE GENOMIC DNA]</scope>
    <source>
        <strain>Ames / isolate Porton</strain>
    </source>
</reference>
<reference key="2">
    <citation type="journal article" date="2009" name="J. Bacteriol.">
        <title>The complete genome sequence of Bacillus anthracis Ames 'Ancestor'.</title>
        <authorList>
            <person name="Ravel J."/>
            <person name="Jiang L."/>
            <person name="Stanley S.T."/>
            <person name="Wilson M.R."/>
            <person name="Decker R.S."/>
            <person name="Read T.D."/>
            <person name="Worsham P."/>
            <person name="Keim P.S."/>
            <person name="Salzberg S.L."/>
            <person name="Fraser-Liggett C.M."/>
            <person name="Rasko D.A."/>
        </authorList>
    </citation>
    <scope>NUCLEOTIDE SEQUENCE [LARGE SCALE GENOMIC DNA]</scope>
    <source>
        <strain>Ames ancestor</strain>
    </source>
</reference>
<reference key="3">
    <citation type="submission" date="2004-01" db="EMBL/GenBank/DDBJ databases">
        <title>Complete genome sequence of Bacillus anthracis Sterne.</title>
        <authorList>
            <person name="Brettin T.S."/>
            <person name="Bruce D."/>
            <person name="Challacombe J.F."/>
            <person name="Gilna P."/>
            <person name="Han C."/>
            <person name="Hill K."/>
            <person name="Hitchcock P."/>
            <person name="Jackson P."/>
            <person name="Keim P."/>
            <person name="Longmire J."/>
            <person name="Lucas S."/>
            <person name="Okinaka R."/>
            <person name="Richardson P."/>
            <person name="Rubin E."/>
            <person name="Tice H."/>
        </authorList>
    </citation>
    <scope>NUCLEOTIDE SEQUENCE [LARGE SCALE GENOMIC DNA]</scope>
    <source>
        <strain>Sterne</strain>
    </source>
</reference>
<organism>
    <name type="scientific">Bacillus anthracis</name>
    <dbReference type="NCBI Taxonomy" id="1392"/>
    <lineage>
        <taxon>Bacteria</taxon>
        <taxon>Bacillati</taxon>
        <taxon>Bacillota</taxon>
        <taxon>Bacilli</taxon>
        <taxon>Bacillales</taxon>
        <taxon>Bacillaceae</taxon>
        <taxon>Bacillus</taxon>
        <taxon>Bacillus cereus group</taxon>
    </lineage>
</organism>
<evidence type="ECO:0000255" key="1">
    <source>
        <dbReference type="HAMAP-Rule" id="MF_00150"/>
    </source>
</evidence>